<sequence length="467" mass="53130">MALHPRRVRLKPWLVAQVDSGLYPGLIWLHRDSKRFQIPWKHATRHSPQQEEENTIFKAWAVETGKYQEGVDDPDPAKWKAQLRCALNKSREFNLMYDGTKEVPMNPVKIYQVCDIPQPQGSIINPGSTGSAPWDEKDNDVDEEDEEDELDQSQHHVPIQDTFPFLNINGSPMAPASVGNCSVGNCSPEAVWPKTEPLEMEVPQAPIQPFYSSPELWISSLPMTDLDIKFQYRGKEYGQTMTVSNPQGCRLFYGDLGPMPDQEELFGPVSLEQVKFPGPEHITNEKQKLFTSKLLDVMDRGLILEVSGHAIYAIRLCQCKVYWSGPCAPSLVAPNLIERQKKVKLFCLETFLSDLIAHQKGQIEKQPPFEIYLCFGEEWPDGKPLERKLILVQVIPVVARMIYEMFSGDFTRSFDSGSVRLQISTPDIKDNIVAQLKQLYRILQTQESWQPMQPTPSMQLPPALPPQ</sequence>
<proteinExistence type="evidence at protein level"/>
<gene>
    <name type="primary">IRF6</name>
</gene>
<protein>
    <recommendedName>
        <fullName>Interferon regulatory factor 6</fullName>
        <shortName>IRF-6</shortName>
    </recommendedName>
</protein>
<reference key="1">
    <citation type="submission" date="1997-09" db="EMBL/GenBank/DDBJ databases">
        <authorList>
            <person name="Grossman A."/>
            <person name="Mittrucker H.W."/>
            <person name="Antonio L."/>
            <person name="Ozato K."/>
            <person name="Mak T.W."/>
        </authorList>
    </citation>
    <scope>NUCLEOTIDE SEQUENCE [MRNA] (ISOFORM 1)</scope>
</reference>
<reference key="2">
    <citation type="submission" date="2011-02" db="EMBL/GenBank/DDBJ databases">
        <title>Homo sapiens interferon regulatory factor 6 (IRF6) gene sequence from Hakka population in Guangdong Province, South China.</title>
        <authorList>
            <person name="Wang H."/>
            <person name="Wu W."/>
            <person name="Hua L."/>
            <person name="Li F."/>
            <person name="Chen Y."/>
            <person name="Cui Y."/>
        </authorList>
    </citation>
    <scope>NUCLEOTIDE SEQUENCE [GENOMIC DNA]</scope>
    <scope>VARIANT ILE-274</scope>
</reference>
<reference key="3">
    <citation type="journal article" date="2004" name="Nat. Genet.">
        <title>Complete sequencing and characterization of 21,243 full-length human cDNAs.</title>
        <authorList>
            <person name="Ota T."/>
            <person name="Suzuki Y."/>
            <person name="Nishikawa T."/>
            <person name="Otsuki T."/>
            <person name="Sugiyama T."/>
            <person name="Irie R."/>
            <person name="Wakamatsu A."/>
            <person name="Hayashi K."/>
            <person name="Sato H."/>
            <person name="Nagai K."/>
            <person name="Kimura K."/>
            <person name="Makita H."/>
            <person name="Sekine M."/>
            <person name="Obayashi M."/>
            <person name="Nishi T."/>
            <person name="Shibahara T."/>
            <person name="Tanaka T."/>
            <person name="Ishii S."/>
            <person name="Yamamoto J."/>
            <person name="Saito K."/>
            <person name="Kawai Y."/>
            <person name="Isono Y."/>
            <person name="Nakamura Y."/>
            <person name="Nagahari K."/>
            <person name="Murakami K."/>
            <person name="Yasuda T."/>
            <person name="Iwayanagi T."/>
            <person name="Wagatsuma M."/>
            <person name="Shiratori A."/>
            <person name="Sudo H."/>
            <person name="Hosoiri T."/>
            <person name="Kaku Y."/>
            <person name="Kodaira H."/>
            <person name="Kondo H."/>
            <person name="Sugawara M."/>
            <person name="Takahashi M."/>
            <person name="Kanda K."/>
            <person name="Yokoi T."/>
            <person name="Furuya T."/>
            <person name="Kikkawa E."/>
            <person name="Omura Y."/>
            <person name="Abe K."/>
            <person name="Kamihara K."/>
            <person name="Katsuta N."/>
            <person name="Sato K."/>
            <person name="Tanikawa M."/>
            <person name="Yamazaki M."/>
            <person name="Ninomiya K."/>
            <person name="Ishibashi T."/>
            <person name="Yamashita H."/>
            <person name="Murakawa K."/>
            <person name="Fujimori K."/>
            <person name="Tanai H."/>
            <person name="Kimata M."/>
            <person name="Watanabe M."/>
            <person name="Hiraoka S."/>
            <person name="Chiba Y."/>
            <person name="Ishida S."/>
            <person name="Ono Y."/>
            <person name="Takiguchi S."/>
            <person name="Watanabe S."/>
            <person name="Yosida M."/>
            <person name="Hotuta T."/>
            <person name="Kusano J."/>
            <person name="Kanehori K."/>
            <person name="Takahashi-Fujii A."/>
            <person name="Hara H."/>
            <person name="Tanase T.-O."/>
            <person name="Nomura Y."/>
            <person name="Togiya S."/>
            <person name="Komai F."/>
            <person name="Hara R."/>
            <person name="Takeuchi K."/>
            <person name="Arita M."/>
            <person name="Imose N."/>
            <person name="Musashino K."/>
            <person name="Yuuki H."/>
            <person name="Oshima A."/>
            <person name="Sasaki N."/>
            <person name="Aotsuka S."/>
            <person name="Yoshikawa Y."/>
            <person name="Matsunawa H."/>
            <person name="Ichihara T."/>
            <person name="Shiohata N."/>
            <person name="Sano S."/>
            <person name="Moriya S."/>
            <person name="Momiyama H."/>
            <person name="Satoh N."/>
            <person name="Takami S."/>
            <person name="Terashima Y."/>
            <person name="Suzuki O."/>
            <person name="Nakagawa S."/>
            <person name="Senoh A."/>
            <person name="Mizoguchi H."/>
            <person name="Goto Y."/>
            <person name="Shimizu F."/>
            <person name="Wakebe H."/>
            <person name="Hishigaki H."/>
            <person name="Watanabe T."/>
            <person name="Sugiyama A."/>
            <person name="Takemoto M."/>
            <person name="Kawakami B."/>
            <person name="Yamazaki M."/>
            <person name="Watanabe K."/>
            <person name="Kumagai A."/>
            <person name="Itakura S."/>
            <person name="Fukuzumi Y."/>
            <person name="Fujimori Y."/>
            <person name="Komiyama M."/>
            <person name="Tashiro H."/>
            <person name="Tanigami A."/>
            <person name="Fujiwara T."/>
            <person name="Ono T."/>
            <person name="Yamada K."/>
            <person name="Fujii Y."/>
            <person name="Ozaki K."/>
            <person name="Hirao M."/>
            <person name="Ohmori Y."/>
            <person name="Kawabata A."/>
            <person name="Hikiji T."/>
            <person name="Kobatake N."/>
            <person name="Inagaki H."/>
            <person name="Ikema Y."/>
            <person name="Okamoto S."/>
            <person name="Okitani R."/>
            <person name="Kawakami T."/>
            <person name="Noguchi S."/>
            <person name="Itoh T."/>
            <person name="Shigeta K."/>
            <person name="Senba T."/>
            <person name="Matsumura K."/>
            <person name="Nakajima Y."/>
            <person name="Mizuno T."/>
            <person name="Morinaga M."/>
            <person name="Sasaki M."/>
            <person name="Togashi T."/>
            <person name="Oyama M."/>
            <person name="Hata H."/>
            <person name="Watanabe M."/>
            <person name="Komatsu T."/>
            <person name="Mizushima-Sugano J."/>
            <person name="Satoh T."/>
            <person name="Shirai Y."/>
            <person name="Takahashi Y."/>
            <person name="Nakagawa K."/>
            <person name="Okumura K."/>
            <person name="Nagase T."/>
            <person name="Nomura N."/>
            <person name="Kikuchi H."/>
            <person name="Masuho Y."/>
            <person name="Yamashita R."/>
            <person name="Nakai K."/>
            <person name="Yada T."/>
            <person name="Nakamura Y."/>
            <person name="Ohara O."/>
            <person name="Isogai T."/>
            <person name="Sugano S."/>
        </authorList>
    </citation>
    <scope>NUCLEOTIDE SEQUENCE [LARGE SCALE MRNA] (ISOFORM 2)</scope>
    <scope>VARIANT ILE-274</scope>
    <source>
        <tissue>Tongue</tissue>
    </source>
</reference>
<reference key="4">
    <citation type="journal article" date="2006" name="Nature">
        <title>The DNA sequence and biological annotation of human chromosome 1.</title>
        <authorList>
            <person name="Gregory S.G."/>
            <person name="Barlow K.F."/>
            <person name="McLay K.E."/>
            <person name="Kaul R."/>
            <person name="Swarbreck D."/>
            <person name="Dunham A."/>
            <person name="Scott C.E."/>
            <person name="Howe K.L."/>
            <person name="Woodfine K."/>
            <person name="Spencer C.C.A."/>
            <person name="Jones M.C."/>
            <person name="Gillson C."/>
            <person name="Searle S."/>
            <person name="Zhou Y."/>
            <person name="Kokocinski F."/>
            <person name="McDonald L."/>
            <person name="Evans R."/>
            <person name="Phillips K."/>
            <person name="Atkinson A."/>
            <person name="Cooper R."/>
            <person name="Jones C."/>
            <person name="Hall R.E."/>
            <person name="Andrews T.D."/>
            <person name="Lloyd C."/>
            <person name="Ainscough R."/>
            <person name="Almeida J.P."/>
            <person name="Ambrose K.D."/>
            <person name="Anderson F."/>
            <person name="Andrew R.W."/>
            <person name="Ashwell R.I.S."/>
            <person name="Aubin K."/>
            <person name="Babbage A.K."/>
            <person name="Bagguley C.L."/>
            <person name="Bailey J."/>
            <person name="Beasley H."/>
            <person name="Bethel G."/>
            <person name="Bird C.P."/>
            <person name="Bray-Allen S."/>
            <person name="Brown J.Y."/>
            <person name="Brown A.J."/>
            <person name="Buckley D."/>
            <person name="Burton J."/>
            <person name="Bye J."/>
            <person name="Carder C."/>
            <person name="Chapman J.C."/>
            <person name="Clark S.Y."/>
            <person name="Clarke G."/>
            <person name="Clee C."/>
            <person name="Cobley V."/>
            <person name="Collier R.E."/>
            <person name="Corby N."/>
            <person name="Coville G.J."/>
            <person name="Davies J."/>
            <person name="Deadman R."/>
            <person name="Dunn M."/>
            <person name="Earthrowl M."/>
            <person name="Ellington A.G."/>
            <person name="Errington H."/>
            <person name="Frankish A."/>
            <person name="Frankland J."/>
            <person name="French L."/>
            <person name="Garner P."/>
            <person name="Garnett J."/>
            <person name="Gay L."/>
            <person name="Ghori M.R.J."/>
            <person name="Gibson R."/>
            <person name="Gilby L.M."/>
            <person name="Gillett W."/>
            <person name="Glithero R.J."/>
            <person name="Grafham D.V."/>
            <person name="Griffiths C."/>
            <person name="Griffiths-Jones S."/>
            <person name="Grocock R."/>
            <person name="Hammond S."/>
            <person name="Harrison E.S.I."/>
            <person name="Hart E."/>
            <person name="Haugen E."/>
            <person name="Heath P.D."/>
            <person name="Holmes S."/>
            <person name="Holt K."/>
            <person name="Howden P.J."/>
            <person name="Hunt A.R."/>
            <person name="Hunt S.E."/>
            <person name="Hunter G."/>
            <person name="Isherwood J."/>
            <person name="James R."/>
            <person name="Johnson C."/>
            <person name="Johnson D."/>
            <person name="Joy A."/>
            <person name="Kay M."/>
            <person name="Kershaw J.K."/>
            <person name="Kibukawa M."/>
            <person name="Kimberley A.M."/>
            <person name="King A."/>
            <person name="Knights A.J."/>
            <person name="Lad H."/>
            <person name="Laird G."/>
            <person name="Lawlor S."/>
            <person name="Leongamornlert D.A."/>
            <person name="Lloyd D.M."/>
            <person name="Loveland J."/>
            <person name="Lovell J."/>
            <person name="Lush M.J."/>
            <person name="Lyne R."/>
            <person name="Martin S."/>
            <person name="Mashreghi-Mohammadi M."/>
            <person name="Matthews L."/>
            <person name="Matthews N.S.W."/>
            <person name="McLaren S."/>
            <person name="Milne S."/>
            <person name="Mistry S."/>
            <person name="Moore M.J.F."/>
            <person name="Nickerson T."/>
            <person name="O'Dell C.N."/>
            <person name="Oliver K."/>
            <person name="Palmeiri A."/>
            <person name="Palmer S.A."/>
            <person name="Parker A."/>
            <person name="Patel D."/>
            <person name="Pearce A.V."/>
            <person name="Peck A.I."/>
            <person name="Pelan S."/>
            <person name="Phelps K."/>
            <person name="Phillimore B.J."/>
            <person name="Plumb R."/>
            <person name="Rajan J."/>
            <person name="Raymond C."/>
            <person name="Rouse G."/>
            <person name="Saenphimmachak C."/>
            <person name="Sehra H.K."/>
            <person name="Sheridan E."/>
            <person name="Shownkeen R."/>
            <person name="Sims S."/>
            <person name="Skuce C.D."/>
            <person name="Smith M."/>
            <person name="Steward C."/>
            <person name="Subramanian S."/>
            <person name="Sycamore N."/>
            <person name="Tracey A."/>
            <person name="Tromans A."/>
            <person name="Van Helmond Z."/>
            <person name="Wall M."/>
            <person name="Wallis J.M."/>
            <person name="White S."/>
            <person name="Whitehead S.L."/>
            <person name="Wilkinson J.E."/>
            <person name="Willey D.L."/>
            <person name="Williams H."/>
            <person name="Wilming L."/>
            <person name="Wray P.W."/>
            <person name="Wu Z."/>
            <person name="Coulson A."/>
            <person name="Vaudin M."/>
            <person name="Sulston J.E."/>
            <person name="Durbin R.M."/>
            <person name="Hubbard T."/>
            <person name="Wooster R."/>
            <person name="Dunham I."/>
            <person name="Carter N.P."/>
            <person name="McVean G."/>
            <person name="Ross M.T."/>
            <person name="Harrow J."/>
            <person name="Olson M.V."/>
            <person name="Beck S."/>
            <person name="Rogers J."/>
            <person name="Bentley D.R."/>
        </authorList>
    </citation>
    <scope>NUCLEOTIDE SEQUENCE [LARGE SCALE GENOMIC DNA]</scope>
</reference>
<reference key="5">
    <citation type="submission" date="2005-09" db="EMBL/GenBank/DDBJ databases">
        <authorList>
            <person name="Mural R.J."/>
            <person name="Istrail S."/>
            <person name="Sutton G.G."/>
            <person name="Florea L."/>
            <person name="Halpern A.L."/>
            <person name="Mobarry C.M."/>
            <person name="Lippert R."/>
            <person name="Walenz B."/>
            <person name="Shatkay H."/>
            <person name="Dew I."/>
            <person name="Miller J.R."/>
            <person name="Flanigan M.J."/>
            <person name="Edwards N.J."/>
            <person name="Bolanos R."/>
            <person name="Fasulo D."/>
            <person name="Halldorsson B.V."/>
            <person name="Hannenhalli S."/>
            <person name="Turner R."/>
            <person name="Yooseph S."/>
            <person name="Lu F."/>
            <person name="Nusskern D.R."/>
            <person name="Shue B.C."/>
            <person name="Zheng X.H."/>
            <person name="Zhong F."/>
            <person name="Delcher A.L."/>
            <person name="Huson D.H."/>
            <person name="Kravitz S.A."/>
            <person name="Mouchard L."/>
            <person name="Reinert K."/>
            <person name="Remington K.A."/>
            <person name="Clark A.G."/>
            <person name="Waterman M.S."/>
            <person name="Eichler E.E."/>
            <person name="Adams M.D."/>
            <person name="Hunkapiller M.W."/>
            <person name="Myers E.W."/>
            <person name="Venter J.C."/>
        </authorList>
    </citation>
    <scope>NUCLEOTIDE SEQUENCE [LARGE SCALE GENOMIC DNA]</scope>
</reference>
<reference key="6">
    <citation type="journal article" date="2004" name="Genome Res.">
        <title>The status, quality, and expansion of the NIH full-length cDNA project: the Mammalian Gene Collection (MGC).</title>
        <authorList>
            <consortium name="The MGC Project Team"/>
        </authorList>
    </citation>
    <scope>NUCLEOTIDE SEQUENCE [LARGE SCALE MRNA] (ISOFORM 1)</scope>
    <source>
        <tissue>Placenta</tissue>
    </source>
</reference>
<reference key="7">
    <citation type="journal article" date="2005" name="J. Biol. Chem.">
        <title>Mammary serine protease inhibitor (Maspin) binds directly to interferon regulatory factor 6: identification of a novel serpin partnership.</title>
        <authorList>
            <person name="Bailey C.M."/>
            <person name="Khalkhali-Ellis Z."/>
            <person name="Kondo S."/>
            <person name="Margaryan N.V."/>
            <person name="Seftor R.E.B."/>
            <person name="Wheaton W.W."/>
            <person name="Amir S."/>
            <person name="Pins M.R."/>
            <person name="Schutte B.C."/>
            <person name="Hendrix M.J.C."/>
        </authorList>
    </citation>
    <scope>INTERACTION WITH SERPINB5</scope>
    <scope>PHOSPHORYLATION</scope>
    <scope>TISSUE SPECIFICITY</scope>
    <scope>SUBCELLULAR LOCATION</scope>
</reference>
<reference key="8">
    <citation type="journal article" date="2008" name="Mol. Cell. Biol.">
        <title>Interferon regulatory factor 6 promotes cell cycle arrest and is regulated by the proteasome in a cell cycle-dependent manner.</title>
        <authorList>
            <person name="Bailey C.M."/>
            <person name="Abbott D.E."/>
            <person name="Margaryan N.V."/>
            <person name="Khalkhali-Ellis Z."/>
            <person name="Hendrix M.J.C."/>
        </authorList>
    </citation>
    <scope>SUBCELLULAR LOCATION</scope>
    <scope>UBIQUITINATION</scope>
    <scope>PHOSPHORYLATION</scope>
</reference>
<reference key="9">
    <citation type="journal article" date="2011" name="BMC Syst. Biol.">
        <title>Initial characterization of the human central proteome.</title>
        <authorList>
            <person name="Burkard T.R."/>
            <person name="Planyavsky M."/>
            <person name="Kaupe I."/>
            <person name="Breitwieser F.P."/>
            <person name="Buerckstuemmer T."/>
            <person name="Bennett K.L."/>
            <person name="Superti-Furga G."/>
            <person name="Colinge J."/>
        </authorList>
    </citation>
    <scope>IDENTIFICATION BY MASS SPECTROMETRY [LARGE SCALE ANALYSIS]</scope>
</reference>
<reference key="10">
    <citation type="journal article" date="2002" name="Nat. Genet.">
        <title>Mutations in IRF6 cause Van der Woude and popliteal pterygium syndromes.</title>
        <authorList>
            <person name="Kondo S."/>
            <person name="Schutte B.C."/>
            <person name="Richardson R.J."/>
            <person name="Bjork B.C."/>
            <person name="Knight A.S."/>
            <person name="Watanabe Y."/>
            <person name="Howard E."/>
            <person name="de Lima R.L.L."/>
            <person name="Daack-Hirsch S."/>
            <person name="Sander A."/>
            <person name="McDonald-McGinn D.M."/>
            <person name="Zackai E.H."/>
            <person name="Lammer E.J."/>
            <person name="Aylsworth A.S."/>
            <person name="Ardinger H.H."/>
            <person name="Lidral A.C."/>
            <person name="Pober B.R."/>
            <person name="Moreno L."/>
            <person name="Arcos-Burgos M."/>
            <person name="Valencia C."/>
            <person name="Houdayer C."/>
            <person name="Bahuau M."/>
            <person name="Moretti-Ferreira D."/>
            <person name="Richieri-Costa A."/>
            <person name="Dixon M.J."/>
            <person name="Murray J.C."/>
        </authorList>
    </citation>
    <scope>VARIANTS VWS1 VAL-2; ALA-18; MET-18; ALA-39; GLY-61; ARG-70; SER-76; HIS-88; GLY-90; HIS-98; GLN-250; ARG-273; 290-PHE--ASP-296 DELINS LEU; PRO-294; ILE-297; GLU-320; MET-321; GLU-325; PRO-345; PHE-347; SER-369; TRP-374 AND GLU-388</scope>
    <scope>VARIANTS PPS GLY-60; THR-66; LYS-82; CYS-84; HIS-84; GLU-89 AND ASN-430</scope>
    <scope>VARIANT ILE-274</scope>
</reference>
<reference key="11">
    <citation type="journal article" date="2003" name="Hum. Genet.">
        <title>Novel mutations in the IRF6 gene for Van der Woude syndrome.</title>
        <authorList>
            <person name="Wang X."/>
            <person name="Liu J."/>
            <person name="Zhang H."/>
            <person name="Xiao M."/>
            <person name="Li J."/>
            <person name="Yang C."/>
            <person name="Lin X."/>
            <person name="Wu Z."/>
            <person name="Hu L."/>
            <person name="Kong X."/>
        </authorList>
    </citation>
    <scope>VARIANTS VWS1 VAL-2; CYS-6 AND TRP-400</scope>
</reference>
<reference key="12">
    <citation type="journal article" date="2003" name="Hum. Genet.">
        <title>Gene symbol IRF6. Disease: Van der Woude syndrome and popliteal pterygium.</title>
        <authorList>
            <person name="Ghassibe M."/>
            <person name="Revencu N."/>
            <person name="Bayet B."/>
            <person name="Gillerot Y."/>
            <person name="Vanwijck R."/>
            <person name="Verellen-Dumoulin C."/>
            <person name="Vikkula M."/>
        </authorList>
    </citation>
    <scope>VARIANTS VWS1 VAL-16; ILE-64; ALA-100 AND PRO-251</scope>
    <scope>VARIANT VWS1/PPS PRO-22</scope>
</reference>
<reference key="13">
    <citation type="journal article" date="2003" name="J. Hum. Genet.">
        <title>Novel IRF6 mutations in Japanese patients with Van der Woude syndrome: two missense mutations (R45Q and P396S) and a 17-kb deletion.</title>
        <authorList>
            <person name="Kayano S."/>
            <person name="Kure S."/>
            <person name="Suzuki Y."/>
            <person name="Kanno K."/>
            <person name="Aoki Y."/>
            <person name="Kondo S."/>
            <person name="Schutte B.C."/>
            <person name="Murray J.C."/>
            <person name="Yamada A."/>
            <person name="Matsubara Y."/>
        </authorList>
    </citation>
    <scope>VARIANTS VWS1 GLN-45 AND SER-396</scope>
</reference>
<reference key="14">
    <citation type="journal article" date="2004" name="Hum. Genet.">
        <title>Gene symbol: IRF6. Disease: Van der Woude syndrome.</title>
        <authorList>
            <person name="Item C.B."/>
            <person name="Turhani D."/>
            <person name="Thurnher D."/>
            <person name="Sinko K."/>
            <person name="Yerit K."/>
            <person name="Galev K."/>
            <person name="Wittwer G."/>
            <person name="Lanre Adeyemo W."/>
            <person name="Klemens F."/>
            <person name="Ewers R."/>
            <person name="Watzinger F."/>
        </authorList>
    </citation>
    <scope>VARIANT VWS1 GLY-84</scope>
</reference>
<reference key="15">
    <citation type="journal article" date="2004" name="N. Engl. J. Med.">
        <title>Interferon regulatory factor 6 (IRF6) gene variants and the risk of isolated cleft lip or palate.</title>
        <authorList>
            <person name="Zucchero T.M."/>
            <person name="Cooper M.E."/>
            <person name="Maher B.S."/>
            <person name="Daack-Hirsch S."/>
            <person name="Nepomuceno B."/>
            <person name="Ribeiro L."/>
            <person name="Caprau D."/>
            <person name="Christensen K."/>
            <person name="Suzuki Y."/>
            <person name="Machida J."/>
            <person name="Natsume N."/>
            <person name="Yoshiura K."/>
            <person name="Vieira A.R."/>
            <person name="Orioli I.M."/>
            <person name="Castilla E.E."/>
            <person name="Moreno L."/>
            <person name="Arcos-Burgos M."/>
            <person name="Lidral A.C."/>
            <person name="Field L.L."/>
            <person name="Liu Y.-E."/>
            <person name="Ray A."/>
            <person name="Goldstein T.H."/>
            <person name="Schultz R.E."/>
            <person name="Shi M."/>
            <person name="Johnson M.K."/>
            <person name="Kondo S."/>
            <person name="Schutte B.C."/>
            <person name="Marazita M.L."/>
            <person name="Murray J.C."/>
        </authorList>
    </citation>
    <scope>ASSOCIATION OF VARIANT ILE-274 WITH OFC6</scope>
</reference>
<reference key="16">
    <citation type="journal article" date="2006" name="J. Dent. Res.">
        <title>A novel missense mutation in Van der Woude syndrome: usefulness of fingernail DNA for genetic analysis.</title>
        <authorList>
            <person name="Matsuzawa N."/>
            <person name="Shimozato K."/>
            <person name="Natsume N."/>
            <person name="Niikawa N."/>
            <person name="Yoshiura K."/>
        </authorList>
    </citation>
    <scope>VARIANT VWS1 VAL-349</scope>
</reference>
<reference key="17">
    <citation type="journal article" date="2008" name="Am. J. Med. Genet. A">
        <title>A novel mutation in IRF6 resulting in VWS-PPS spectrum disorder with renal aplasia.</title>
        <authorList>
            <person name="de Medeiros F."/>
            <person name="Hansen L."/>
            <person name="Mawlad E."/>
            <person name="Eiberg H."/>
            <person name="Asklund C."/>
            <person name="Tommerup N."/>
            <person name="Jakobsen L.P."/>
        </authorList>
    </citation>
    <scope>VARIANT VWS1 ILE-339</scope>
</reference>
<reference key="18">
    <citation type="journal article" date="2009" name="Hum. Mol. Genet.">
        <title>Missense mutations that cause Van der Woude syndrome and popliteal pterygium syndrome affect the DNA-binding and transcriptional activation functions of IRF6.</title>
        <authorList>
            <person name="Little H.J."/>
            <person name="Rorick N.K."/>
            <person name="Su L.-I."/>
            <person name="Baldock C."/>
            <person name="Malhotra S."/>
            <person name="Jowitt T."/>
            <person name="Gakhar L."/>
            <person name="Subramanian R."/>
            <person name="Schutte B.C."/>
            <person name="Dixon M.J."/>
            <person name="Shore P."/>
        </authorList>
    </citation>
    <scope>CHARACTERIZATION OF VARIANTS VWS1/PPS ALA-18; MET-18; PRO-22; GLY-60; ARG-70; SER-76; CYS-84; GLY-84; HIS-84; GLU-89 AND HIS-98</scope>
</reference>
<reference key="19">
    <citation type="journal article" date="2010" name="Am. J. Med. Genet. A">
        <title>Two missense mutations of the IRF6 gene in two Japanese families with popliteal pterygium syndrome.</title>
        <authorList>
            <person name="Matsuzawa N."/>
            <person name="Kondo S."/>
            <person name="Shimozato K."/>
            <person name="Nagao T."/>
            <person name="Nakano M."/>
            <person name="Tsuda M."/>
            <person name="Hirano A."/>
            <person name="Niikawa N."/>
            <person name="Yoshiura K."/>
        </authorList>
    </citation>
    <scope>VARIANTS PPS LEU-84 AND LEU-424</scope>
    <scope>CHARACTERIZATION OF VARIANT PPS LEU-424</scope>
</reference>
<reference key="20">
    <citation type="journal article" date="2010" name="Am. J. Med. Genet. A">
        <title>IRF6 mutations in mixed isolated familial clefting.</title>
        <authorList>
            <person name="Rutledge K.D."/>
            <person name="Barger C."/>
            <person name="Grant J.H."/>
            <person name="Robin N.H."/>
        </authorList>
    </citation>
    <scope>VARIANT OFC6 SER-369</scope>
</reference>
<reference key="21">
    <citation type="journal article" date="2015" name="Am. J. Med. Genet. A">
        <title>Expanding the genetic and phenotypic spectrum of popliteal pterygium disorders.</title>
        <authorList>
            <person name="Leslie E.J."/>
            <person name="O'Sullivan J."/>
            <person name="Cunningham M.L."/>
            <person name="Singh A."/>
            <person name="Goudy S.L."/>
            <person name="Ababneh F."/>
            <person name="Alsubaie L."/>
            <person name="Ch'ng G.S."/>
            <person name="van der Laar I.M."/>
            <person name="Hoogeboom A.J."/>
            <person name="Dunnwald M."/>
            <person name="Kapoor S."/>
            <person name="Jiramongkolchai P."/>
            <person name="Standley J."/>
            <person name="Manak J.R."/>
            <person name="Murray J.C."/>
            <person name="Dixon M.J."/>
        </authorList>
    </citation>
    <scope>VARIANT PPS PRO-439</scope>
</reference>
<accession>O14896</accession>
<accession>B4DLE2</accession>
<accession>D3DT90</accession>
<accession>F5GWX8</accession>
<accession>G0ZTL0</accession>
<organism>
    <name type="scientific">Homo sapiens</name>
    <name type="common">Human</name>
    <dbReference type="NCBI Taxonomy" id="9606"/>
    <lineage>
        <taxon>Eukaryota</taxon>
        <taxon>Metazoa</taxon>
        <taxon>Chordata</taxon>
        <taxon>Craniata</taxon>
        <taxon>Vertebrata</taxon>
        <taxon>Euteleostomi</taxon>
        <taxon>Mammalia</taxon>
        <taxon>Eutheria</taxon>
        <taxon>Euarchontoglires</taxon>
        <taxon>Primates</taxon>
        <taxon>Haplorrhini</taxon>
        <taxon>Catarrhini</taxon>
        <taxon>Hominidae</taxon>
        <taxon>Homo</taxon>
    </lineage>
</organism>
<name>IRF6_HUMAN</name>
<comment type="function">
    <text evidence="1">Probable DNA-binding transcriptional activator. Key determinant of the keratinocyte proliferation-differentiation switch involved in appropriate epidermal development (By similarity). Plays a role in regulating mammary epithelial cell proliferation (By similarity). May regulate WDR65 transcription (By similarity).</text>
</comment>
<comment type="subunit">
    <text evidence="11">Interacts with SERPINB5.</text>
</comment>
<comment type="interaction">
    <interactant intactId="EBI-6115643">
        <id>O14896</id>
    </interactant>
    <interactant intactId="EBI-2866563">
        <id>Q02556</id>
        <label>IRF8</label>
    </interactant>
    <organismsDiffer>false</organismsDiffer>
    <experiments>3</experiments>
</comment>
<comment type="subcellular location">
    <subcellularLocation>
        <location evidence="21">Nucleus</location>
    </subcellularLocation>
    <subcellularLocation>
        <location evidence="11 13">Cytoplasm</location>
    </subcellularLocation>
    <text evidence="1">Translocates to nucleus in response to an activating signal.</text>
</comment>
<comment type="alternative products">
    <event type="alternative splicing"/>
    <isoform>
        <id>O14896-1</id>
        <name>1</name>
        <sequence type="displayed"/>
    </isoform>
    <isoform>
        <id>O14896-2</id>
        <name>2</name>
        <sequence type="described" ref="VSP_046435"/>
    </isoform>
</comment>
<comment type="tissue specificity">
    <text evidence="11">Expressed in normal mammary epithelial cells. Expression is reduced or absent in breast carcinomas.</text>
</comment>
<comment type="PTM">
    <text evidence="11 13">Phosphorylated. Phosphorylation status depends on the cell cycle and is a signal for ubiquitination and proteasome-mediated degradation.</text>
</comment>
<comment type="disease" evidence="4 5 6 7 9 12 14 15">
    <disease id="DI-01123">
        <name>Van der Woude syndrome 1</name>
        <acronym>VWS1</acronym>
        <description>An autosomal dominant developmental disorder characterized by lower lip pits, cleft lip and/or cleft palate.</description>
        <dbReference type="MIM" id="119300"/>
    </disease>
    <text>The disease is caused by variants affecting the gene represented in this entry.</text>
</comment>
<comment type="disease" evidence="4 7 15 16 18">
    <disease id="DI-02181">
        <name>Popliteal pterygium syndrome</name>
        <acronym>PPS</acronym>
        <description>An autosomal dominant disorder characterized by oro-facial, skin and genital anomalies. Expressivity is variable. Clinical features include cleft lip/palate, lower lip cysts, syngnathia, congenital ankyloblepharon filiforme in some cases, bifid scrotum, hypoplastic scrotum, hypoplastic uterus, talipes equinovarus.</description>
        <dbReference type="MIM" id="119500"/>
    </disease>
    <text>The disease is caused by variants affecting the gene represented in this entry.</text>
</comment>
<comment type="disease" evidence="10 17">
    <disease id="DI-00827">
        <name>Non-syndromic orofacial cleft 6</name>
        <acronym>OFC6</acronym>
        <description>A birth defect consisting of cleft lips with or without cleft palate. Cleft lips are associated with cleft palate in two-third of cases. A cleft lip can occur on one or both sides and range in severity from a simple notch in the upper lip to a complete opening in the lip extending into the floor of the nostril and involving the upper gum.</description>
        <dbReference type="MIM" id="608864"/>
    </disease>
    <text>Disease susceptibility is associated with variants affecting the gene represented in this entry.</text>
</comment>
<comment type="similarity">
    <text evidence="2">Belongs to the IRF family.</text>
</comment>
<dbReference type="EMBL" id="AF027292">
    <property type="protein sequence ID" value="AAB84111.1"/>
    <property type="molecule type" value="mRNA"/>
</dbReference>
<dbReference type="EMBL" id="JF346417">
    <property type="protein sequence ID" value="AEL89176.1"/>
    <property type="molecule type" value="Genomic_DNA"/>
</dbReference>
<dbReference type="EMBL" id="AK296960">
    <property type="protein sequence ID" value="BAG59504.1"/>
    <property type="molecule type" value="mRNA"/>
</dbReference>
<dbReference type="EMBL" id="AL022398">
    <property type="status" value="NOT_ANNOTATED_CDS"/>
    <property type="molecule type" value="Genomic_DNA"/>
</dbReference>
<dbReference type="EMBL" id="CH471100">
    <property type="protein sequence ID" value="EAW93438.1"/>
    <property type="molecule type" value="Genomic_DNA"/>
</dbReference>
<dbReference type="EMBL" id="CH471100">
    <property type="protein sequence ID" value="EAW93439.1"/>
    <property type="molecule type" value="Genomic_DNA"/>
</dbReference>
<dbReference type="EMBL" id="BC014852">
    <property type="protein sequence ID" value="AAH14852.1"/>
    <property type="molecule type" value="mRNA"/>
</dbReference>
<dbReference type="CCDS" id="CCDS1492.1">
    <molecule id="O14896-1"/>
</dbReference>
<dbReference type="CCDS" id="CCDS55681.1">
    <molecule id="O14896-2"/>
</dbReference>
<dbReference type="RefSeq" id="NP_001193625.1">
    <molecule id="O14896-2"/>
    <property type="nucleotide sequence ID" value="NM_001206696.2"/>
</dbReference>
<dbReference type="RefSeq" id="NP_006138.1">
    <molecule id="O14896-1"/>
    <property type="nucleotide sequence ID" value="NM_006147.4"/>
</dbReference>
<dbReference type="SMR" id="O14896"/>
<dbReference type="BioGRID" id="109872">
    <property type="interactions" value="17"/>
</dbReference>
<dbReference type="FunCoup" id="O14896">
    <property type="interactions" value="1257"/>
</dbReference>
<dbReference type="IntAct" id="O14896">
    <property type="interactions" value="16"/>
</dbReference>
<dbReference type="MINT" id="O14896"/>
<dbReference type="STRING" id="9606.ENSP00000355988"/>
<dbReference type="GlyGen" id="O14896">
    <property type="glycosylation" value="2 sites"/>
</dbReference>
<dbReference type="iPTMnet" id="O14896"/>
<dbReference type="PhosphoSitePlus" id="O14896"/>
<dbReference type="BioMuta" id="IRF6"/>
<dbReference type="jPOST" id="O14896"/>
<dbReference type="MassIVE" id="O14896"/>
<dbReference type="PaxDb" id="9606-ENSP00000355988"/>
<dbReference type="PeptideAtlas" id="O14896"/>
<dbReference type="ProteomicsDB" id="24251"/>
<dbReference type="ProteomicsDB" id="48286">
    <molecule id="O14896-1"/>
</dbReference>
<dbReference type="Pumba" id="O14896"/>
<dbReference type="TopDownProteomics" id="O14896-1">
    <molecule id="O14896-1"/>
</dbReference>
<dbReference type="Antibodypedia" id="20702">
    <property type="antibodies" value="450 antibodies from 39 providers"/>
</dbReference>
<dbReference type="DNASU" id="3664"/>
<dbReference type="Ensembl" id="ENST00000367021.8">
    <molecule id="O14896-1"/>
    <property type="protein sequence ID" value="ENSP00000355988.3"/>
    <property type="gene ID" value="ENSG00000117595.13"/>
</dbReference>
<dbReference type="Ensembl" id="ENST00000542854.5">
    <molecule id="O14896-2"/>
    <property type="protein sequence ID" value="ENSP00000440532.1"/>
    <property type="gene ID" value="ENSG00000117595.13"/>
</dbReference>
<dbReference type="GeneID" id="3664"/>
<dbReference type="KEGG" id="hsa:3664"/>
<dbReference type="MANE-Select" id="ENST00000367021.8">
    <property type="protein sequence ID" value="ENSP00000355988.3"/>
    <property type="RefSeq nucleotide sequence ID" value="NM_006147.4"/>
    <property type="RefSeq protein sequence ID" value="NP_006138.1"/>
</dbReference>
<dbReference type="UCSC" id="uc001hhq.3">
    <molecule id="O14896-1"/>
    <property type="organism name" value="human"/>
</dbReference>
<dbReference type="AGR" id="HGNC:6121"/>
<dbReference type="CTD" id="3664"/>
<dbReference type="DisGeNET" id="3664"/>
<dbReference type="GeneCards" id="IRF6"/>
<dbReference type="GeneReviews" id="IRF6"/>
<dbReference type="HGNC" id="HGNC:6121">
    <property type="gene designation" value="IRF6"/>
</dbReference>
<dbReference type="HPA" id="ENSG00000117595">
    <property type="expression patterns" value="Tissue enhanced (esophagus, skin)"/>
</dbReference>
<dbReference type="MalaCards" id="IRF6"/>
<dbReference type="MIM" id="119300">
    <property type="type" value="phenotype"/>
</dbReference>
<dbReference type="MIM" id="119500">
    <property type="type" value="phenotype"/>
</dbReference>
<dbReference type="MIM" id="607199">
    <property type="type" value="gene"/>
</dbReference>
<dbReference type="MIM" id="608864">
    <property type="type" value="phenotype"/>
</dbReference>
<dbReference type="neXtProt" id="NX_O14896"/>
<dbReference type="OpenTargets" id="ENSG00000117595"/>
<dbReference type="Orphanet" id="1300">
    <property type="disease" value="Autosomal dominant popliteal pterygium syndrome"/>
</dbReference>
<dbReference type="Orphanet" id="141291">
    <property type="disease" value="Cleft lip and alveolus"/>
</dbReference>
<dbReference type="Orphanet" id="199306">
    <property type="disease" value="Cleft lip/palate"/>
</dbReference>
<dbReference type="Orphanet" id="199302">
    <property type="disease" value="Isolated cleft lip"/>
</dbReference>
<dbReference type="Orphanet" id="99798">
    <property type="disease" value="Oligodontia"/>
</dbReference>
<dbReference type="Orphanet" id="888">
    <property type="disease" value="Van der Woude syndrome"/>
</dbReference>
<dbReference type="PharmGKB" id="PA29920"/>
<dbReference type="VEuPathDB" id="HostDB:ENSG00000117595"/>
<dbReference type="eggNOG" id="ENOG502QRNT">
    <property type="taxonomic scope" value="Eukaryota"/>
</dbReference>
<dbReference type="GeneTree" id="ENSGT00940000157451"/>
<dbReference type="InParanoid" id="O14896"/>
<dbReference type="OMA" id="NEAWPKE"/>
<dbReference type="OrthoDB" id="9856880at2759"/>
<dbReference type="PAN-GO" id="O14896">
    <property type="GO annotations" value="5 GO annotations based on evolutionary models"/>
</dbReference>
<dbReference type="PhylomeDB" id="O14896"/>
<dbReference type="TreeFam" id="TF328512"/>
<dbReference type="PathwayCommons" id="O14896"/>
<dbReference type="Reactome" id="R-HSA-877300">
    <property type="pathway name" value="Interferon gamma signaling"/>
</dbReference>
<dbReference type="Reactome" id="R-HSA-909733">
    <property type="pathway name" value="Interferon alpha/beta signaling"/>
</dbReference>
<dbReference type="SignaLink" id="O14896"/>
<dbReference type="BioGRID-ORCS" id="3664">
    <property type="hits" value="6 hits in 1175 CRISPR screens"/>
</dbReference>
<dbReference type="ChiTaRS" id="IRF6">
    <property type="organism name" value="human"/>
</dbReference>
<dbReference type="GeneWiki" id="IRF6"/>
<dbReference type="GenomeRNAi" id="3664"/>
<dbReference type="Pharos" id="O14896">
    <property type="development level" value="Tbio"/>
</dbReference>
<dbReference type="PRO" id="PR:O14896"/>
<dbReference type="Proteomes" id="UP000005640">
    <property type="component" value="Chromosome 1"/>
</dbReference>
<dbReference type="RNAct" id="O14896">
    <property type="molecule type" value="protein"/>
</dbReference>
<dbReference type="Bgee" id="ENSG00000117595">
    <property type="expression patterns" value="Expressed in secondary oocyte and 151 other cell types or tissues"/>
</dbReference>
<dbReference type="ExpressionAtlas" id="O14896">
    <property type="expression patterns" value="baseline and differential"/>
</dbReference>
<dbReference type="GO" id="GO:0000785">
    <property type="term" value="C:chromatin"/>
    <property type="evidence" value="ECO:0000247"/>
    <property type="project" value="NTNU_SB"/>
</dbReference>
<dbReference type="GO" id="GO:0005737">
    <property type="term" value="C:cytoplasm"/>
    <property type="evidence" value="ECO:0000314"/>
    <property type="project" value="UniProtKB"/>
</dbReference>
<dbReference type="GO" id="GO:0005829">
    <property type="term" value="C:cytosol"/>
    <property type="evidence" value="ECO:0000304"/>
    <property type="project" value="Reactome"/>
</dbReference>
<dbReference type="GO" id="GO:0070062">
    <property type="term" value="C:extracellular exosome"/>
    <property type="evidence" value="ECO:0007005"/>
    <property type="project" value="UniProtKB"/>
</dbReference>
<dbReference type="GO" id="GO:0005634">
    <property type="term" value="C:nucleus"/>
    <property type="evidence" value="ECO:0000318"/>
    <property type="project" value="GO_Central"/>
</dbReference>
<dbReference type="GO" id="GO:0003677">
    <property type="term" value="F:DNA binding"/>
    <property type="evidence" value="ECO:0000250"/>
    <property type="project" value="UniProtKB"/>
</dbReference>
<dbReference type="GO" id="GO:0001228">
    <property type="term" value="F:DNA-binding transcription activator activity, RNA polymerase II-specific"/>
    <property type="evidence" value="ECO:0007669"/>
    <property type="project" value="Ensembl"/>
</dbReference>
<dbReference type="GO" id="GO:0003700">
    <property type="term" value="F:DNA-binding transcription factor activity"/>
    <property type="evidence" value="ECO:0000250"/>
    <property type="project" value="UniProtKB"/>
</dbReference>
<dbReference type="GO" id="GO:0000981">
    <property type="term" value="F:DNA-binding transcription factor activity, RNA polymerase II-specific"/>
    <property type="evidence" value="ECO:0000247"/>
    <property type="project" value="NTNU_SB"/>
</dbReference>
<dbReference type="GO" id="GO:0000978">
    <property type="term" value="F:RNA polymerase II cis-regulatory region sequence-specific DNA binding"/>
    <property type="evidence" value="ECO:0000318"/>
    <property type="project" value="GO_Central"/>
</dbReference>
<dbReference type="GO" id="GO:0043565">
    <property type="term" value="F:sequence-specific DNA binding"/>
    <property type="evidence" value="ECO:0000314"/>
    <property type="project" value="NTNU_SB"/>
</dbReference>
<dbReference type="GO" id="GO:1990837">
    <property type="term" value="F:sequence-specific double-stranded DNA binding"/>
    <property type="evidence" value="ECO:0000314"/>
    <property type="project" value="ARUK-UCL"/>
</dbReference>
<dbReference type="GO" id="GO:0048468">
    <property type="term" value="P:cell development"/>
    <property type="evidence" value="ECO:0007669"/>
    <property type="project" value="Ensembl"/>
</dbReference>
<dbReference type="GO" id="GO:1904888">
    <property type="term" value="P:cranial skeletal system development"/>
    <property type="evidence" value="ECO:0007669"/>
    <property type="project" value="Ensembl"/>
</dbReference>
<dbReference type="GO" id="GO:0002376">
    <property type="term" value="P:immune system process"/>
    <property type="evidence" value="ECO:0000318"/>
    <property type="project" value="GO_Central"/>
</dbReference>
<dbReference type="GO" id="GO:0030216">
    <property type="term" value="P:keratinocyte differentiation"/>
    <property type="evidence" value="ECO:0007669"/>
    <property type="project" value="Ensembl"/>
</dbReference>
<dbReference type="GO" id="GO:0043616">
    <property type="term" value="P:keratinocyte proliferation"/>
    <property type="evidence" value="ECO:0007669"/>
    <property type="project" value="Ensembl"/>
</dbReference>
<dbReference type="GO" id="GO:0060173">
    <property type="term" value="P:limb development"/>
    <property type="evidence" value="ECO:0007669"/>
    <property type="project" value="Ensembl"/>
</dbReference>
<dbReference type="GO" id="GO:0060644">
    <property type="term" value="P:mammary gland epithelial cell differentiation"/>
    <property type="evidence" value="ECO:0000250"/>
    <property type="project" value="UniProtKB"/>
</dbReference>
<dbReference type="GO" id="GO:0008285">
    <property type="term" value="P:negative regulation of cell population proliferation"/>
    <property type="evidence" value="ECO:0000314"/>
    <property type="project" value="UniProtKB"/>
</dbReference>
<dbReference type="GO" id="GO:0010839">
    <property type="term" value="P:negative regulation of keratinocyte proliferation"/>
    <property type="evidence" value="ECO:0007669"/>
    <property type="project" value="Ensembl"/>
</dbReference>
<dbReference type="GO" id="GO:2000647">
    <property type="term" value="P:negative regulation of stem cell proliferation"/>
    <property type="evidence" value="ECO:0007669"/>
    <property type="project" value="Ensembl"/>
</dbReference>
<dbReference type="GO" id="GO:0045893">
    <property type="term" value="P:positive regulation of DNA-templated transcription"/>
    <property type="evidence" value="ECO:0000250"/>
    <property type="project" value="UniProtKB"/>
</dbReference>
<dbReference type="GO" id="GO:0045944">
    <property type="term" value="P:positive regulation of transcription by RNA polymerase II"/>
    <property type="evidence" value="ECO:0000314"/>
    <property type="project" value="NTNU_SB"/>
</dbReference>
<dbReference type="GO" id="GO:0006357">
    <property type="term" value="P:regulation of transcription by RNA polymerase II"/>
    <property type="evidence" value="ECO:0000318"/>
    <property type="project" value="GO_Central"/>
</dbReference>
<dbReference type="GO" id="GO:0060021">
    <property type="term" value="P:roof of mouth development"/>
    <property type="evidence" value="ECO:0007669"/>
    <property type="project" value="Ensembl"/>
</dbReference>
<dbReference type="GO" id="GO:0072089">
    <property type="term" value="P:stem cell proliferation"/>
    <property type="evidence" value="ECO:0007669"/>
    <property type="project" value="Ensembl"/>
</dbReference>
<dbReference type="CDD" id="cd00103">
    <property type="entry name" value="IRF"/>
    <property type="match status" value="1"/>
</dbReference>
<dbReference type="FunFam" id="2.60.200.10:FF:000003">
    <property type="entry name" value="Interferon regulatory factor 5"/>
    <property type="match status" value="1"/>
</dbReference>
<dbReference type="FunFam" id="1.10.10.10:FF:000093">
    <property type="entry name" value="Putative interferon regulatory factor 6"/>
    <property type="match status" value="1"/>
</dbReference>
<dbReference type="Gene3D" id="2.60.200.10">
    <property type="match status" value="1"/>
</dbReference>
<dbReference type="Gene3D" id="1.10.10.10">
    <property type="entry name" value="Winged helix-like DNA-binding domain superfamily/Winged helix DNA-binding domain"/>
    <property type="match status" value="1"/>
</dbReference>
<dbReference type="InterPro" id="IPR019817">
    <property type="entry name" value="Interferon_reg_fac_CS"/>
</dbReference>
<dbReference type="InterPro" id="IPR001346">
    <property type="entry name" value="Interferon_reg_fact_DNA-bd_dom"/>
</dbReference>
<dbReference type="InterPro" id="IPR019471">
    <property type="entry name" value="Interferon_reg_factor-3"/>
</dbReference>
<dbReference type="InterPro" id="IPR017855">
    <property type="entry name" value="SMAD-like_dom_sf"/>
</dbReference>
<dbReference type="InterPro" id="IPR008984">
    <property type="entry name" value="SMAD_FHA_dom_sf"/>
</dbReference>
<dbReference type="InterPro" id="IPR036388">
    <property type="entry name" value="WH-like_DNA-bd_sf"/>
</dbReference>
<dbReference type="InterPro" id="IPR036390">
    <property type="entry name" value="WH_DNA-bd_sf"/>
</dbReference>
<dbReference type="PANTHER" id="PTHR11949">
    <property type="entry name" value="INTERFERON REGULATORY FACTOR"/>
    <property type="match status" value="1"/>
</dbReference>
<dbReference type="PANTHER" id="PTHR11949:SF9">
    <property type="entry name" value="INTERFERON REGULATORY FACTOR 6"/>
    <property type="match status" value="1"/>
</dbReference>
<dbReference type="Pfam" id="PF00605">
    <property type="entry name" value="IRF"/>
    <property type="match status" value="1"/>
</dbReference>
<dbReference type="Pfam" id="PF10401">
    <property type="entry name" value="IRF-3"/>
    <property type="match status" value="1"/>
</dbReference>
<dbReference type="PRINTS" id="PR00267">
    <property type="entry name" value="INTFRNREGFCT"/>
</dbReference>
<dbReference type="SMART" id="SM00348">
    <property type="entry name" value="IRF"/>
    <property type="match status" value="1"/>
</dbReference>
<dbReference type="SMART" id="SM01243">
    <property type="entry name" value="IRF-3"/>
    <property type="match status" value="1"/>
</dbReference>
<dbReference type="SUPFAM" id="SSF49879">
    <property type="entry name" value="SMAD/FHA domain"/>
    <property type="match status" value="1"/>
</dbReference>
<dbReference type="SUPFAM" id="SSF46785">
    <property type="entry name" value="Winged helix' DNA-binding domain"/>
    <property type="match status" value="1"/>
</dbReference>
<dbReference type="PROSITE" id="PS00601">
    <property type="entry name" value="IRF_1"/>
    <property type="match status" value="1"/>
</dbReference>
<dbReference type="PROSITE" id="PS51507">
    <property type="entry name" value="IRF_2"/>
    <property type="match status" value="1"/>
</dbReference>
<keyword id="KW-0025">Alternative splicing</keyword>
<keyword id="KW-0963">Cytoplasm</keyword>
<keyword id="KW-0221">Differentiation</keyword>
<keyword id="KW-0225">Disease variant</keyword>
<keyword id="KW-0238">DNA-binding</keyword>
<keyword id="KW-0539">Nucleus</keyword>
<keyword id="KW-1267">Proteomics identification</keyword>
<keyword id="KW-1185">Reference proteome</keyword>
<keyword id="KW-0804">Transcription</keyword>
<keyword id="KW-0805">Transcription regulation</keyword>
<keyword id="KW-0832">Ubl conjugation</keyword>
<feature type="chain" id="PRO_0000154560" description="Interferon regulatory factor 6">
    <location>
        <begin position="1"/>
        <end position="467"/>
    </location>
</feature>
<feature type="DNA-binding region" description="IRF tryptophan pentad repeat" evidence="2">
    <location>
        <begin position="7"/>
        <end position="115"/>
    </location>
</feature>
<feature type="region of interest" description="Disordered" evidence="3">
    <location>
        <begin position="121"/>
        <end position="156"/>
    </location>
</feature>
<feature type="compositionally biased region" description="Polar residues" evidence="3">
    <location>
        <begin position="121"/>
        <end position="131"/>
    </location>
</feature>
<feature type="compositionally biased region" description="Acidic residues" evidence="3">
    <location>
        <begin position="137"/>
        <end position="151"/>
    </location>
</feature>
<feature type="splice variant" id="VSP_046435" description="In isoform 2." evidence="20">
    <location>
        <begin position="1"/>
        <end position="95"/>
    </location>
</feature>
<feature type="sequence variant" id="VAR_014961" description="In VWS1; dbSNP:rs28942093." evidence="4 5">
    <original>A</original>
    <variation>V</variation>
    <location>
        <position position="2"/>
    </location>
</feature>
<feature type="sequence variant" id="VAR_030046" description="In VWS1; dbSNP:rs28942094." evidence="5">
    <original>R</original>
    <variation>C</variation>
    <location>
        <position position="6"/>
    </location>
</feature>
<feature type="sequence variant" id="VAR_030047" description="In VWS1." evidence="7">
    <original>A</original>
    <variation>V</variation>
    <location>
        <position position="16"/>
    </location>
</feature>
<feature type="sequence variant" id="VAR_014962" description="In VWS1; abrogates DNA binding." evidence="4 15">
    <original>V</original>
    <variation>A</variation>
    <location>
        <position position="18"/>
    </location>
</feature>
<feature type="sequence variant" id="VAR_014963" description="In VWS1; abrogates DNA binding; dbSNP:rs2077940645." evidence="4 15">
    <original>V</original>
    <variation>M</variation>
    <location>
        <position position="18"/>
    </location>
</feature>
<feature type="sequence variant" id="VAR_030048" description="In VWS1 and PPS; abrogates DNA binding; dbSNP:rs387906967." evidence="7 15">
    <original>L</original>
    <variation>P</variation>
    <location>
        <position position="22"/>
    </location>
</feature>
<feature type="sequence variant" id="VAR_014964" description="In VWS1." evidence="4">
    <original>P</original>
    <variation>A</variation>
    <location>
        <position position="39"/>
    </location>
</feature>
<feature type="sequence variant" id="VAR_030049" description="In VWS1; dbSNP:rs121434229." evidence="6">
    <original>R</original>
    <variation>Q</variation>
    <location>
        <position position="45"/>
    </location>
</feature>
<feature type="sequence variant" id="VAR_014965" description="In PPS; abrogates DNA binding." evidence="4 15">
    <original>W</original>
    <variation>G</variation>
    <location>
        <position position="60"/>
    </location>
</feature>
<feature type="sequence variant" id="VAR_014966" description="In VWS1." evidence="4">
    <original>A</original>
    <variation>G</variation>
    <location>
        <position position="61"/>
    </location>
</feature>
<feature type="sequence variant" id="VAR_030050" description="In VWS1." evidence="7">
    <original>T</original>
    <variation>I</variation>
    <location>
        <position position="64"/>
    </location>
</feature>
<feature type="sequence variant" id="VAR_014967" description="In PPS." evidence="4">
    <original>K</original>
    <variation>T</variation>
    <location>
        <position position="66"/>
    </location>
</feature>
<feature type="sequence variant" id="VAR_014968" description="In VWS1; does not affect DNA binding; dbSNP:rs776236749." evidence="4 15">
    <original>G</original>
    <variation>R</variation>
    <location>
        <position position="70"/>
    </location>
</feature>
<feature type="sequence variant" id="VAR_014969" description="In VWS1; abrogates DNA binding; dbSNP:rs886039388." evidence="4 15">
    <original>P</original>
    <variation>S</variation>
    <location>
        <position position="76"/>
    </location>
</feature>
<feature type="sequence variant" id="VAR_014970" description="In PPS; dbSNP:rs2102542895." evidence="4">
    <original>Q</original>
    <variation>K</variation>
    <location>
        <position position="82"/>
    </location>
</feature>
<feature type="sequence variant" id="VAR_014971" description="In PPS; abrogates DNA binding; dbSNP:rs121434226." evidence="4 15">
    <original>R</original>
    <variation>C</variation>
    <location>
        <position position="84"/>
    </location>
</feature>
<feature type="sequence variant" id="VAR_030051" description="In VWS1; abrogates DNA binding; dbSNP:rs121434226." evidence="9 15">
    <original>R</original>
    <variation>G</variation>
    <location>
        <position position="84"/>
    </location>
</feature>
<feature type="sequence variant" id="VAR_014972" description="In PPS; abrogates DNA binding; dbSNP:rs121434227." evidence="4 15">
    <original>R</original>
    <variation>H</variation>
    <location>
        <position position="84"/>
    </location>
</feature>
<feature type="sequence variant" id="VAR_064475" description="In PPS; dbSNP:rs121434227." evidence="16">
    <original>R</original>
    <variation>L</variation>
    <location>
        <position position="84"/>
    </location>
</feature>
<feature type="sequence variant" id="VAR_014973" description="In VWS1." evidence="4">
    <original>N</original>
    <variation>H</variation>
    <location>
        <position position="88"/>
    </location>
</feature>
<feature type="sequence variant" id="VAR_014974" description="In PPS; abrogates DNA binding." evidence="4 15">
    <original>K</original>
    <variation>E</variation>
    <location>
        <position position="89"/>
    </location>
</feature>
<feature type="sequence variant" id="VAR_014975" description="In VWS1." evidence="4">
    <original>S</original>
    <variation>G</variation>
    <location>
        <position position="90"/>
    </location>
</feature>
<feature type="sequence variant" id="VAR_014976" description="In VWS1; abrogates DNA binding; dbSNP:rs1571983348." evidence="4 15">
    <original>D</original>
    <variation>H</variation>
    <location>
        <position position="98"/>
    </location>
</feature>
<feature type="sequence variant" id="VAR_030052" description="In VWS1." evidence="7">
    <original>T</original>
    <variation>A</variation>
    <location>
        <position position="100"/>
    </location>
</feature>
<feature type="sequence variant" id="VAR_014977" description="In VWS1; dbSNP:rs1553247774." evidence="4">
    <original>R</original>
    <variation>Q</variation>
    <location>
        <position position="250"/>
    </location>
</feature>
<feature type="sequence variant" id="VAR_030053" description="In VWS1." evidence="7">
    <original>L</original>
    <variation>P</variation>
    <location>
        <position position="251"/>
    </location>
</feature>
<feature type="sequence variant" id="VAR_014978" description="In VWS1." evidence="4">
    <original>Q</original>
    <variation>R</variation>
    <location>
        <position position="273"/>
    </location>
</feature>
<feature type="sequence variant" id="VAR_014979" description="3% in European-descended and 22% in Asian populations; responsible for 12% of the genetic contribution to cleft lip or palate; tripled the risk of recurrence in families that already had 1 affected child; dbSNP:rs2235371." evidence="4 8 19">
    <original>V</original>
    <variation>I</variation>
    <location>
        <position position="274"/>
    </location>
</feature>
<feature type="sequence variant" id="VAR_014980" description="In VWS1." evidence="4">
    <original>FTSKLLD</original>
    <variation>L</variation>
    <location>
        <begin position="290"/>
        <end position="296"/>
    </location>
</feature>
<feature type="sequence variant" id="VAR_014981" description="In VWS1." evidence="4">
    <original>L</original>
    <variation>P</variation>
    <location>
        <position position="294"/>
    </location>
</feature>
<feature type="sequence variant" id="VAR_014982" description="In VWS1; dbSNP:rs779827384." evidence="4">
    <original>V</original>
    <variation>I</variation>
    <location>
        <position position="297"/>
    </location>
</feature>
<feature type="sequence variant" id="VAR_014983" description="In VWS1." evidence="4">
    <original>K</original>
    <variation>E</variation>
    <location>
        <position position="320"/>
    </location>
</feature>
<feature type="sequence variant" id="VAR_014984" description="In VWS1; dbSNP:rs2102536882." evidence="4">
    <original>V</original>
    <variation>M</variation>
    <location>
        <position position="321"/>
    </location>
</feature>
<feature type="sequence variant" id="VAR_014985" description="In VWS1." evidence="4">
    <original>G</original>
    <variation>E</variation>
    <location>
        <position position="325"/>
    </location>
</feature>
<feature type="sequence variant" id="VAR_059080" description="In VWS1; dbSNP:rs121434231." evidence="14">
    <original>R</original>
    <variation>I</variation>
    <location>
        <position position="339"/>
    </location>
</feature>
<feature type="sequence variant" id="VAR_014986" description="In VWS1." evidence="4">
    <original>L</original>
    <variation>P</variation>
    <location>
        <position position="345"/>
    </location>
</feature>
<feature type="sequence variant" id="VAR_014987" description="In VWS1." evidence="4">
    <original>C</original>
    <variation>F</variation>
    <location>
        <position position="347"/>
    </location>
</feature>
<feature type="sequence variant" id="VAR_030054" description="In VWS1." evidence="12">
    <original>E</original>
    <variation>V</variation>
    <location>
        <position position="349"/>
    </location>
</feature>
<feature type="sequence variant" id="VAR_014988" description="In VWS1 and OFC6; dbSNP:rs1185412313." evidence="4 17">
    <original>F</original>
    <variation>S</variation>
    <location>
        <position position="369"/>
    </location>
</feature>
<feature type="sequence variant" id="VAR_014989" description="In VWS1." evidence="4">
    <original>C</original>
    <variation>W</variation>
    <location>
        <position position="374"/>
    </location>
</feature>
<feature type="sequence variant" id="VAR_014990" description="In VWS1." evidence="4">
    <original>K</original>
    <variation>E</variation>
    <location>
        <position position="388"/>
    </location>
</feature>
<feature type="sequence variant" id="VAR_030055" description="In VWS1; dbSNP:rs121434230." evidence="6">
    <original>P</original>
    <variation>S</variation>
    <location>
        <position position="396"/>
    </location>
</feature>
<feature type="sequence variant" id="VAR_030056" description="In VWS1; dbSNP:rs28942095." evidence="5">
    <original>R</original>
    <variation>W</variation>
    <location>
        <position position="400"/>
    </location>
</feature>
<feature type="sequence variant" id="VAR_064476" description="In PPS; significant decrease of transcriptional activity; dbSNP:rs387906968." evidence="16">
    <original>S</original>
    <variation>L</variation>
    <location>
        <position position="424"/>
    </location>
</feature>
<feature type="sequence variant" id="VAR_014991" description="In PPS." evidence="4">
    <original>D</original>
    <variation>N</variation>
    <location>
        <position position="430"/>
    </location>
</feature>
<feature type="sequence variant" id="VAR_085700" description="In PPS; uncertain significance; dbSNP:rs886038202." evidence="18">
    <original>L</original>
    <variation>P</variation>
    <location>
        <position position="439"/>
    </location>
</feature>
<evidence type="ECO:0000250" key="1"/>
<evidence type="ECO:0000255" key="2">
    <source>
        <dbReference type="PROSITE-ProRule" id="PRU00840"/>
    </source>
</evidence>
<evidence type="ECO:0000256" key="3">
    <source>
        <dbReference type="SAM" id="MobiDB-lite"/>
    </source>
</evidence>
<evidence type="ECO:0000269" key="4">
    <source>
    </source>
</evidence>
<evidence type="ECO:0000269" key="5">
    <source>
    </source>
</evidence>
<evidence type="ECO:0000269" key="6">
    <source>
    </source>
</evidence>
<evidence type="ECO:0000269" key="7">
    <source>
    </source>
</evidence>
<evidence type="ECO:0000269" key="8">
    <source>
    </source>
</evidence>
<evidence type="ECO:0000269" key="9">
    <source>
    </source>
</evidence>
<evidence type="ECO:0000269" key="10">
    <source>
    </source>
</evidence>
<evidence type="ECO:0000269" key="11">
    <source>
    </source>
</evidence>
<evidence type="ECO:0000269" key="12">
    <source>
    </source>
</evidence>
<evidence type="ECO:0000269" key="13">
    <source>
    </source>
</evidence>
<evidence type="ECO:0000269" key="14">
    <source>
    </source>
</evidence>
<evidence type="ECO:0000269" key="15">
    <source>
    </source>
</evidence>
<evidence type="ECO:0000269" key="16">
    <source>
    </source>
</evidence>
<evidence type="ECO:0000269" key="17">
    <source>
    </source>
</evidence>
<evidence type="ECO:0000269" key="18">
    <source>
    </source>
</evidence>
<evidence type="ECO:0000269" key="19">
    <source ref="2"/>
</evidence>
<evidence type="ECO:0000303" key="20">
    <source>
    </source>
</evidence>
<evidence type="ECO:0000305" key="21"/>